<organism>
    <name type="scientific">Oryza sativa</name>
    <name type="common">Rice</name>
    <dbReference type="NCBI Taxonomy" id="4530"/>
    <lineage>
        <taxon>Eukaryota</taxon>
        <taxon>Viridiplantae</taxon>
        <taxon>Streptophyta</taxon>
        <taxon>Embryophyta</taxon>
        <taxon>Tracheophyta</taxon>
        <taxon>Spermatophyta</taxon>
        <taxon>Magnoliopsida</taxon>
        <taxon>Liliopsida</taxon>
        <taxon>Poales</taxon>
        <taxon>Poaceae</taxon>
        <taxon>BOP clade</taxon>
        <taxon>Oryzoideae</taxon>
        <taxon>Oryzeae</taxon>
        <taxon>Oryzinae</taxon>
        <taxon>Oryza</taxon>
    </lineage>
</organism>
<protein>
    <recommendedName>
        <fullName evidence="1">NAD(P)H-quinone oxidoreductase subunit K, chloroplastic</fullName>
        <ecNumber evidence="1">7.1.1.-</ecNumber>
    </recommendedName>
    <alternativeName>
        <fullName evidence="1">NAD(P)H dehydrogenase subunit K</fullName>
    </alternativeName>
    <alternativeName>
        <fullName evidence="1">NADH-plastoquinone oxidoreductase subunit K</fullName>
    </alternativeName>
</protein>
<comment type="function">
    <text evidence="1">NDH shuttles electrons from NAD(P)H:plastoquinone, via FMN and iron-sulfur (Fe-S) centers, to quinones in the photosynthetic chain and possibly in a chloroplast respiratory chain. The immediate electron acceptor for the enzyme in this species is believed to be plastoquinone. Couples the redox reaction to proton translocation, and thus conserves the redox energy in a proton gradient.</text>
</comment>
<comment type="catalytic activity">
    <reaction evidence="1">
        <text>a plastoquinone + NADH + (n+1) H(+)(in) = a plastoquinol + NAD(+) + n H(+)(out)</text>
        <dbReference type="Rhea" id="RHEA:42608"/>
        <dbReference type="Rhea" id="RHEA-COMP:9561"/>
        <dbReference type="Rhea" id="RHEA-COMP:9562"/>
        <dbReference type="ChEBI" id="CHEBI:15378"/>
        <dbReference type="ChEBI" id="CHEBI:17757"/>
        <dbReference type="ChEBI" id="CHEBI:57540"/>
        <dbReference type="ChEBI" id="CHEBI:57945"/>
        <dbReference type="ChEBI" id="CHEBI:62192"/>
    </reaction>
</comment>
<comment type="catalytic activity">
    <reaction evidence="1">
        <text>a plastoquinone + NADPH + (n+1) H(+)(in) = a plastoquinol + NADP(+) + n H(+)(out)</text>
        <dbReference type="Rhea" id="RHEA:42612"/>
        <dbReference type="Rhea" id="RHEA-COMP:9561"/>
        <dbReference type="Rhea" id="RHEA-COMP:9562"/>
        <dbReference type="ChEBI" id="CHEBI:15378"/>
        <dbReference type="ChEBI" id="CHEBI:17757"/>
        <dbReference type="ChEBI" id="CHEBI:57783"/>
        <dbReference type="ChEBI" id="CHEBI:58349"/>
        <dbReference type="ChEBI" id="CHEBI:62192"/>
    </reaction>
</comment>
<comment type="cofactor">
    <cofactor evidence="1">
        <name>[4Fe-4S] cluster</name>
        <dbReference type="ChEBI" id="CHEBI:49883"/>
    </cofactor>
    <text evidence="1">Binds 1 [4Fe-4S] cluster.</text>
</comment>
<comment type="subunit">
    <text evidence="1">NDH is composed of at least 16 different subunits, 5 of which are encoded in the nucleus.</text>
</comment>
<comment type="subcellular location">
    <subcellularLocation>
        <location evidence="1">Plastid</location>
        <location evidence="1">Chloroplast thylakoid membrane</location>
        <topology evidence="1">Peripheral membrane protein</topology>
        <orientation evidence="1">Stromal side</orientation>
    </subcellularLocation>
</comment>
<comment type="similarity">
    <text evidence="1">Belongs to the complex I 20 kDa subunit family.</text>
</comment>
<comment type="sequence caution" evidence="2">
    <conflict type="erroneous initiation">
        <sequence resource="EMBL-CDS" id="AAS46187"/>
    </conflict>
</comment>
<evidence type="ECO:0000255" key="1">
    <source>
        <dbReference type="HAMAP-Rule" id="MF_01356"/>
    </source>
</evidence>
<evidence type="ECO:0000305" key="2"/>
<proteinExistence type="inferred from homology"/>
<feature type="chain" id="PRO_0000118752" description="NAD(P)H-quinone oxidoreductase subunit K, chloroplastic">
    <location>
        <begin position="1"/>
        <end position="225"/>
    </location>
</feature>
<feature type="binding site" evidence="1">
    <location>
        <position position="43"/>
    </location>
    <ligand>
        <name>[4Fe-4S] cluster</name>
        <dbReference type="ChEBI" id="CHEBI:49883"/>
    </ligand>
</feature>
<feature type="binding site" evidence="1">
    <location>
        <position position="44"/>
    </location>
    <ligand>
        <name>[4Fe-4S] cluster</name>
        <dbReference type="ChEBI" id="CHEBI:49883"/>
    </ligand>
</feature>
<feature type="binding site" evidence="1">
    <location>
        <position position="108"/>
    </location>
    <ligand>
        <name>[4Fe-4S] cluster</name>
        <dbReference type="ChEBI" id="CHEBI:49883"/>
    </ligand>
</feature>
<feature type="binding site" evidence="1">
    <location>
        <position position="139"/>
    </location>
    <ligand>
        <name>[4Fe-4S] cluster</name>
        <dbReference type="ChEBI" id="CHEBI:49883"/>
    </ligand>
</feature>
<gene>
    <name evidence="1" type="primary">ndhK</name>
    <name type="ORF">PA058</name>
</gene>
<accession>P0C341</accession>
<accession>P12159</accession>
<accession>Q6QY07</accession>
<accession>Q6QY71</accession>
<dbReference type="EC" id="7.1.1.-" evidence="1"/>
<dbReference type="EMBL" id="AY522331">
    <property type="protein sequence ID" value="AAS46187.1"/>
    <property type="status" value="ALT_INIT"/>
    <property type="molecule type" value="Genomic_DNA"/>
</dbReference>
<dbReference type="SMR" id="P0C341"/>
<dbReference type="ExpressionAtlas" id="P0C341">
    <property type="expression patterns" value="baseline"/>
</dbReference>
<dbReference type="GO" id="GO:0009535">
    <property type="term" value="C:chloroplast thylakoid membrane"/>
    <property type="evidence" value="ECO:0007669"/>
    <property type="project" value="UniProtKB-SubCell"/>
</dbReference>
<dbReference type="GO" id="GO:0009536">
    <property type="term" value="C:plastid"/>
    <property type="evidence" value="ECO:0000305"/>
    <property type="project" value="Gramene"/>
</dbReference>
<dbReference type="GO" id="GO:0045271">
    <property type="term" value="C:respiratory chain complex I"/>
    <property type="evidence" value="ECO:0007669"/>
    <property type="project" value="TreeGrafter"/>
</dbReference>
<dbReference type="GO" id="GO:0051539">
    <property type="term" value="F:4 iron, 4 sulfur cluster binding"/>
    <property type="evidence" value="ECO:0007669"/>
    <property type="project" value="UniProtKB-KW"/>
</dbReference>
<dbReference type="GO" id="GO:0005506">
    <property type="term" value="F:iron ion binding"/>
    <property type="evidence" value="ECO:0007669"/>
    <property type="project" value="UniProtKB-UniRule"/>
</dbReference>
<dbReference type="GO" id="GO:0008137">
    <property type="term" value="F:NADH dehydrogenase (ubiquinone) activity"/>
    <property type="evidence" value="ECO:0007669"/>
    <property type="project" value="InterPro"/>
</dbReference>
<dbReference type="GO" id="GO:0048038">
    <property type="term" value="F:quinone binding"/>
    <property type="evidence" value="ECO:0007669"/>
    <property type="project" value="UniProtKB-KW"/>
</dbReference>
<dbReference type="GO" id="GO:0009060">
    <property type="term" value="P:aerobic respiration"/>
    <property type="evidence" value="ECO:0007669"/>
    <property type="project" value="TreeGrafter"/>
</dbReference>
<dbReference type="GO" id="GO:0015990">
    <property type="term" value="P:electron transport coupled proton transport"/>
    <property type="evidence" value="ECO:0007669"/>
    <property type="project" value="TreeGrafter"/>
</dbReference>
<dbReference type="GO" id="GO:0019684">
    <property type="term" value="P:photosynthesis, light reaction"/>
    <property type="evidence" value="ECO:0007669"/>
    <property type="project" value="UniProtKB-UniRule"/>
</dbReference>
<dbReference type="FunFam" id="3.40.50.12280:FF:000003">
    <property type="entry name" value="NAD(P)H-quinone oxidoreductase subunit K, chloroplastic"/>
    <property type="match status" value="1"/>
</dbReference>
<dbReference type="Gene3D" id="3.40.50.12280">
    <property type="match status" value="1"/>
</dbReference>
<dbReference type="HAMAP" id="MF_01356">
    <property type="entry name" value="NDH1_NuoB"/>
    <property type="match status" value="1"/>
</dbReference>
<dbReference type="InterPro" id="IPR006137">
    <property type="entry name" value="NADH_UbQ_OxRdtase-like_20kDa"/>
</dbReference>
<dbReference type="InterPro" id="IPR006138">
    <property type="entry name" value="NADH_UQ_OxRdtase_20Kd_su"/>
</dbReference>
<dbReference type="NCBIfam" id="TIGR01957">
    <property type="entry name" value="nuoB_fam"/>
    <property type="match status" value="1"/>
</dbReference>
<dbReference type="NCBIfam" id="NF005012">
    <property type="entry name" value="PRK06411.1"/>
    <property type="match status" value="1"/>
</dbReference>
<dbReference type="PANTHER" id="PTHR11995">
    <property type="entry name" value="NADH DEHYDROGENASE"/>
    <property type="match status" value="1"/>
</dbReference>
<dbReference type="PANTHER" id="PTHR11995:SF14">
    <property type="entry name" value="NADH DEHYDROGENASE [UBIQUINONE] IRON-SULFUR PROTEIN 7, MITOCHONDRIAL"/>
    <property type="match status" value="1"/>
</dbReference>
<dbReference type="Pfam" id="PF01058">
    <property type="entry name" value="Oxidored_q6"/>
    <property type="match status" value="1"/>
</dbReference>
<dbReference type="SUPFAM" id="SSF56770">
    <property type="entry name" value="HydA/Nqo6-like"/>
    <property type="match status" value="1"/>
</dbReference>
<dbReference type="PROSITE" id="PS01150">
    <property type="entry name" value="COMPLEX1_20K"/>
    <property type="match status" value="1"/>
</dbReference>
<name>NDHK_ORYSA</name>
<geneLocation type="chloroplast"/>
<sequence length="225" mass="25216">MSLIEFPLLDQTSSNSVISTTLKDLSNWSRLSSLWPLLYGTSCCFIEFASLIGSRFDFDRYGLVPRSSPRQADLILTAGTVTMKMAPSLVRLYEQMPEPKYVIAMGACTITGGMFSTDSYSTVRGVDKLIPVDVYLPGCPPKPEAVIDALTKLRKKISREIVEDRTLSQKKNRCFTTSHKLYVRRSTNTGTYEQELLYQSPSTLDISSETFFKSKSPVSSYKLVN</sequence>
<keyword id="KW-0004">4Fe-4S</keyword>
<keyword id="KW-0150">Chloroplast</keyword>
<keyword id="KW-0408">Iron</keyword>
<keyword id="KW-0411">Iron-sulfur</keyword>
<keyword id="KW-0472">Membrane</keyword>
<keyword id="KW-0479">Metal-binding</keyword>
<keyword id="KW-0520">NAD</keyword>
<keyword id="KW-0521">NADP</keyword>
<keyword id="KW-0934">Plastid</keyword>
<keyword id="KW-0618">Plastoquinone</keyword>
<keyword id="KW-0874">Quinone</keyword>
<keyword id="KW-0793">Thylakoid</keyword>
<keyword id="KW-1278">Translocase</keyword>
<keyword id="KW-0813">Transport</keyword>
<reference key="1">
    <citation type="journal article" date="2004" name="Plant Physiol.">
        <title>A comparison of rice chloroplast genomes.</title>
        <authorList>
            <person name="Tang J."/>
            <person name="Xia H."/>
            <person name="Cao M."/>
            <person name="Zhang X."/>
            <person name="Zeng W."/>
            <person name="Hu S."/>
            <person name="Tong W."/>
            <person name="Wang J."/>
            <person name="Wang J."/>
            <person name="Yu J."/>
            <person name="Yang H."/>
            <person name="Zhu L."/>
        </authorList>
    </citation>
    <scope>NUCLEOTIDE SEQUENCE [LARGE SCALE GENOMIC DNA]</scope>
    <source>
        <strain>cv. PA64s</strain>
    </source>
</reference>